<organism>
    <name type="scientific">Caenorhabditis briggsae</name>
    <dbReference type="NCBI Taxonomy" id="6238"/>
    <lineage>
        <taxon>Eukaryota</taxon>
        <taxon>Metazoa</taxon>
        <taxon>Ecdysozoa</taxon>
        <taxon>Nematoda</taxon>
        <taxon>Chromadorea</taxon>
        <taxon>Rhabditida</taxon>
        <taxon>Rhabditina</taxon>
        <taxon>Rhabditomorpha</taxon>
        <taxon>Rhabditoidea</taxon>
        <taxon>Rhabditidae</taxon>
        <taxon>Peloderinae</taxon>
        <taxon>Caenorhabditis</taxon>
    </lineage>
</organism>
<proteinExistence type="inferred from homology"/>
<name>VPS41_CAEBR</name>
<comment type="function">
    <text evidence="1 2">Plays a role in vesicle-mediated protein trafficking to lysosomal compartments including the endocytic membrane transport pathways. Believed to act in part as a core component of the putative HOPS endosomal tethering complex which is proposed to be involved in the rab-5-to-rab-7 endosome conversion probably implicating sand-1, and via binding SNAREs and SNARE complexes to mediate tethering and docking events during SNARE-mediated membrane fusion. The HOPS complex is proposed to be recruited to rab-7 on the late endosomal membrane and to regulate late endocytic, phagocytic and autophagic traffic towards lysosomes. Within the HOPS complex, contributes to the normal development of gut granules in the adult intestine. May mediate the tethering of autophagosomes with lysosomes. Has a role in the negative regulation of apoptosis. Required for uptake of exogenous dsRNA which is used in experimental RNA silencing.</text>
</comment>
<comment type="subunit">
    <text evidence="1">Probable component of the homotypic fusion and vacuole protein sorting (HOPS) complex consisting of the core class C Vps proteins vps-11, vps-16, vps-18, and which further associates with vps-33.1, vps-39 and vps-41.</text>
</comment>
<comment type="subcellular location">
    <subcellularLocation>
        <location evidence="1">Endosome membrane</location>
    </subcellularLocation>
    <subcellularLocation>
        <location evidence="1">Late endosome</location>
    </subcellularLocation>
    <subcellularLocation>
        <location evidence="1">Lysosome</location>
    </subcellularLocation>
    <subcellularLocation>
        <location evidence="1">Golgi apparatus</location>
        <location evidence="1">trans-Golgi network</location>
    </subcellularLocation>
    <subcellularLocation>
        <location evidence="1">Early endosome</location>
    </subcellularLocation>
    <subcellularLocation>
        <location evidence="1">Cytoplasmic vesicle</location>
        <location evidence="1">Clathrin-coated vesicle</location>
    </subcellularLocation>
</comment>
<comment type="similarity">
    <text evidence="3">Belongs to the VPS41 family.</text>
</comment>
<accession>Q618H8</accession>
<accession>A8XKD7</accession>
<protein>
    <recommendedName>
        <fullName>Vacuolar protein sorting-associated protein 41 homolog</fullName>
    </recommendedName>
</protein>
<keyword id="KW-0053">Apoptosis</keyword>
<keyword id="KW-0968">Cytoplasmic vesicle</keyword>
<keyword id="KW-0967">Endosome</keyword>
<keyword id="KW-0333">Golgi apparatus</keyword>
<keyword id="KW-0458">Lysosome</keyword>
<keyword id="KW-0472">Membrane</keyword>
<keyword id="KW-0479">Metal-binding</keyword>
<keyword id="KW-0653">Protein transport</keyword>
<keyword id="KW-1185">Reference proteome</keyword>
<keyword id="KW-0813">Transport</keyword>
<keyword id="KW-0862">Zinc</keyword>
<keyword id="KW-0863">Zinc-finger</keyword>
<feature type="chain" id="PRO_0000298663" description="Vacuolar protein sorting-associated protein 41 homolog">
    <location>
        <begin position="1"/>
        <end position="898"/>
    </location>
</feature>
<feature type="repeat" description="CHCR">
    <location>
        <begin position="614"/>
        <end position="756"/>
    </location>
</feature>
<feature type="zinc finger region" description="RING-type; atypical" evidence="4">
    <location>
        <begin position="835"/>
        <end position="890"/>
    </location>
</feature>
<feature type="region of interest" description="Disordered" evidence="5">
    <location>
        <begin position="1"/>
        <end position="35"/>
    </location>
</feature>
<feature type="compositionally biased region" description="Basic and acidic residues" evidence="5">
    <location>
        <begin position="1"/>
        <end position="10"/>
    </location>
</feature>
<evidence type="ECO:0000250" key="1">
    <source>
        <dbReference type="UniProtKB" id="P49754"/>
    </source>
</evidence>
<evidence type="ECO:0000250" key="2">
    <source>
        <dbReference type="UniProtKB" id="Q19954"/>
    </source>
</evidence>
<evidence type="ECO:0000255" key="3"/>
<evidence type="ECO:0000255" key="4">
    <source>
        <dbReference type="PROSITE-ProRule" id="PRU00175"/>
    </source>
</evidence>
<evidence type="ECO:0000256" key="5">
    <source>
        <dbReference type="SAM" id="MobiDB-lite"/>
    </source>
</evidence>
<dbReference type="EMBL" id="HE600983">
    <property type="protein sequence ID" value="CAP33111.3"/>
    <property type="molecule type" value="Genomic_DNA"/>
</dbReference>
<dbReference type="SMR" id="Q618H8"/>
<dbReference type="FunCoup" id="Q618H8">
    <property type="interactions" value="2388"/>
</dbReference>
<dbReference type="STRING" id="6238.Q618H8"/>
<dbReference type="KEGG" id="cbr:CBG_14653"/>
<dbReference type="CTD" id="8586668"/>
<dbReference type="WormBase" id="CBG14653">
    <property type="protein sequence ID" value="CBP39412"/>
    <property type="gene ID" value="WBGene00035081"/>
    <property type="gene designation" value="Cbr-vps-41"/>
</dbReference>
<dbReference type="eggNOG" id="KOG2066">
    <property type="taxonomic scope" value="Eukaryota"/>
</dbReference>
<dbReference type="HOGENOM" id="CLU_001285_2_2_1"/>
<dbReference type="InParanoid" id="Q618H8"/>
<dbReference type="OMA" id="PQLVWQD"/>
<dbReference type="Proteomes" id="UP000008549">
    <property type="component" value="Unassembled WGS sequence"/>
</dbReference>
<dbReference type="GO" id="GO:0030136">
    <property type="term" value="C:clathrin-coated vesicle"/>
    <property type="evidence" value="ECO:0007669"/>
    <property type="project" value="UniProtKB-SubCell"/>
</dbReference>
<dbReference type="GO" id="GO:0005769">
    <property type="term" value="C:early endosome"/>
    <property type="evidence" value="ECO:0007669"/>
    <property type="project" value="UniProtKB-SubCell"/>
</dbReference>
<dbReference type="GO" id="GO:0010008">
    <property type="term" value="C:endosome membrane"/>
    <property type="evidence" value="ECO:0007669"/>
    <property type="project" value="UniProtKB-SubCell"/>
</dbReference>
<dbReference type="GO" id="GO:0005794">
    <property type="term" value="C:Golgi apparatus"/>
    <property type="evidence" value="ECO:0007669"/>
    <property type="project" value="UniProtKB-SubCell"/>
</dbReference>
<dbReference type="GO" id="GO:0030897">
    <property type="term" value="C:HOPS complex"/>
    <property type="evidence" value="ECO:0000318"/>
    <property type="project" value="GO_Central"/>
</dbReference>
<dbReference type="GO" id="GO:0005770">
    <property type="term" value="C:late endosome"/>
    <property type="evidence" value="ECO:0000318"/>
    <property type="project" value="GO_Central"/>
</dbReference>
<dbReference type="GO" id="GO:0005764">
    <property type="term" value="C:lysosome"/>
    <property type="evidence" value="ECO:0007669"/>
    <property type="project" value="UniProtKB-SubCell"/>
</dbReference>
<dbReference type="GO" id="GO:0008270">
    <property type="term" value="F:zinc ion binding"/>
    <property type="evidence" value="ECO:0007669"/>
    <property type="project" value="UniProtKB-KW"/>
</dbReference>
<dbReference type="GO" id="GO:0006915">
    <property type="term" value="P:apoptotic process"/>
    <property type="evidence" value="ECO:0007669"/>
    <property type="project" value="UniProtKB-KW"/>
</dbReference>
<dbReference type="GO" id="GO:0009267">
    <property type="term" value="P:cellular response to starvation"/>
    <property type="evidence" value="ECO:0000318"/>
    <property type="project" value="GO_Central"/>
</dbReference>
<dbReference type="GO" id="GO:0034058">
    <property type="term" value="P:endosomal vesicle fusion"/>
    <property type="evidence" value="ECO:0000318"/>
    <property type="project" value="GO_Central"/>
</dbReference>
<dbReference type="GO" id="GO:0016236">
    <property type="term" value="P:macroautophagy"/>
    <property type="evidence" value="ECO:0000318"/>
    <property type="project" value="GO_Central"/>
</dbReference>
<dbReference type="GO" id="GO:0043066">
    <property type="term" value="P:negative regulation of apoptotic process"/>
    <property type="evidence" value="ECO:0000250"/>
    <property type="project" value="UniProtKB"/>
</dbReference>
<dbReference type="GO" id="GO:0006623">
    <property type="term" value="P:protein targeting to vacuole"/>
    <property type="evidence" value="ECO:0000318"/>
    <property type="project" value="GO_Central"/>
</dbReference>
<dbReference type="GO" id="GO:0006624">
    <property type="term" value="P:vacuolar protein processing"/>
    <property type="evidence" value="ECO:0000250"/>
    <property type="project" value="UniProtKB"/>
</dbReference>
<dbReference type="GO" id="GO:0007034">
    <property type="term" value="P:vacuolar transport"/>
    <property type="evidence" value="ECO:0000250"/>
    <property type="project" value="UniProtKB"/>
</dbReference>
<dbReference type="FunFam" id="2.130.10.10:FF:002395">
    <property type="entry name" value="Vacuolar protein sorting-associated protein 41 homolog"/>
    <property type="match status" value="1"/>
</dbReference>
<dbReference type="Gene3D" id="1.25.40.10">
    <property type="entry name" value="Tetratricopeptide repeat domain"/>
    <property type="match status" value="1"/>
</dbReference>
<dbReference type="Gene3D" id="2.130.10.10">
    <property type="entry name" value="YVTN repeat-like/Quinoprotein amine dehydrogenase"/>
    <property type="match status" value="1"/>
</dbReference>
<dbReference type="InterPro" id="IPR000547">
    <property type="entry name" value="Clathrin_H-chain/VPS_repeat"/>
</dbReference>
<dbReference type="InterPro" id="IPR011990">
    <property type="entry name" value="TPR-like_helical_dom_sf"/>
</dbReference>
<dbReference type="InterPro" id="IPR016902">
    <property type="entry name" value="VPS41"/>
</dbReference>
<dbReference type="InterPro" id="IPR045111">
    <property type="entry name" value="Vps41/Vps8"/>
</dbReference>
<dbReference type="InterPro" id="IPR015943">
    <property type="entry name" value="WD40/YVTN_repeat-like_dom_sf"/>
</dbReference>
<dbReference type="InterPro" id="IPR036322">
    <property type="entry name" value="WD40_repeat_dom_sf"/>
</dbReference>
<dbReference type="InterPro" id="IPR001841">
    <property type="entry name" value="Znf_RING"/>
</dbReference>
<dbReference type="PANTHER" id="PTHR12616">
    <property type="entry name" value="VACUOLAR PROTEIN SORTING VPS41"/>
    <property type="match status" value="1"/>
</dbReference>
<dbReference type="PANTHER" id="PTHR12616:SF1">
    <property type="entry name" value="VACUOLAR PROTEIN SORTING-ASSOCIATED PROTEIN 41 HOMOLOG"/>
    <property type="match status" value="1"/>
</dbReference>
<dbReference type="Pfam" id="PF23411">
    <property type="entry name" value="Beta-prop_Vps41"/>
    <property type="match status" value="1"/>
</dbReference>
<dbReference type="Pfam" id="PF23556">
    <property type="entry name" value="TPR_Vps41"/>
    <property type="match status" value="1"/>
</dbReference>
<dbReference type="Pfam" id="PF23555">
    <property type="entry name" value="zf-RING_Vps41"/>
    <property type="match status" value="1"/>
</dbReference>
<dbReference type="PIRSF" id="PIRSF028921">
    <property type="entry name" value="VPS41"/>
    <property type="match status" value="1"/>
</dbReference>
<dbReference type="SMART" id="SM00299">
    <property type="entry name" value="CLH"/>
    <property type="match status" value="1"/>
</dbReference>
<dbReference type="SUPFAM" id="SSF50978">
    <property type="entry name" value="WD40 repeat-like"/>
    <property type="match status" value="1"/>
</dbReference>
<dbReference type="PROSITE" id="PS50236">
    <property type="entry name" value="CHCR"/>
    <property type="match status" value="1"/>
</dbReference>
<dbReference type="PROSITE" id="PS50089">
    <property type="entry name" value="ZF_RING_2"/>
    <property type="match status" value="1"/>
</dbReference>
<reference key="1">
    <citation type="journal article" date="2003" name="PLoS Biol.">
        <title>The genome sequence of Caenorhabditis briggsae: a platform for comparative genomics.</title>
        <authorList>
            <person name="Stein L.D."/>
            <person name="Bao Z."/>
            <person name="Blasiar D."/>
            <person name="Blumenthal T."/>
            <person name="Brent M.R."/>
            <person name="Chen N."/>
            <person name="Chinwalla A."/>
            <person name="Clarke L."/>
            <person name="Clee C."/>
            <person name="Coghlan A."/>
            <person name="Coulson A."/>
            <person name="D'Eustachio P."/>
            <person name="Fitch D.H.A."/>
            <person name="Fulton L.A."/>
            <person name="Fulton R.E."/>
            <person name="Griffiths-Jones S."/>
            <person name="Harris T.W."/>
            <person name="Hillier L.W."/>
            <person name="Kamath R."/>
            <person name="Kuwabara P.E."/>
            <person name="Mardis E.R."/>
            <person name="Marra M.A."/>
            <person name="Miner T.L."/>
            <person name="Minx P."/>
            <person name="Mullikin J.C."/>
            <person name="Plumb R.W."/>
            <person name="Rogers J."/>
            <person name="Schein J.E."/>
            <person name="Sohrmann M."/>
            <person name="Spieth J."/>
            <person name="Stajich J.E."/>
            <person name="Wei C."/>
            <person name="Willey D."/>
            <person name="Wilson R.K."/>
            <person name="Durbin R.M."/>
            <person name="Waterston R.H."/>
        </authorList>
    </citation>
    <scope>NUCLEOTIDE SEQUENCE [LARGE SCALE GENOMIC DNA]</scope>
    <source>
        <strain>AF16</strain>
    </source>
</reference>
<sequence>MDESNDKENEFGDSFLEDSGDITRTTEDEDEAPLEPRFKYERLEGESTLPFMKTATFTSIDLHDKFIAIGTASGLIYILDHHGYGNFDSVPPLKPHRCAVSKLKFDETGSYILSCANDSKLVVSGIGNDKLCCTVNIQVMPKSICFSPDFIRQQSGHCFIMGERNLVLYEKRLFQYKASNLYSGSERDGFIHCCSWNDNLIAFTNDTGTRVYERGTEKILTSVQPTHDVDRVRSSRCPPKHMWMSENTLVIGWADTVTVLKIKGNEGMRKGEIHHIFHVSMFISGISYLPKNGSDYELFLVGLQMEGEDFDDCASVMSTMTTLTAMESSATATLKTCVIRPLGLKDYELQSEDEIVNIRLSTHTLPYMIHGLGIPYLSTYFILTTKQIIMAVPYGPEDGIKWRLQYKLYTEAFEMAKEHADMLAKTDVSPKKVGRKIIEGYLESKKARVAASWLSSICGDCKEEWEWAVDRFHDAKMSTLLGDVLPDSKPRLDPSAYEKVLLASLFNNVKLFRRLVQTWSPDLYMTSTIIDQTQWRIQQISKSEDIEDVEEVEKILMDALAHLYLYERKYESALKILMICQDFQIFNVIDKHQLFDLVKDQISDLMNINSERALRLLLDNADSVEPSFVMAKINGQPKLQLAYLTKLMSRNEGIEFADKAVQLYADHEKKKLLPFLKKNVNYNVTKARKLCSDRGFVEETIFLLAKSGNHYEAVKMMVREYKNIEKVIAYCKDQNDRDLWIHLLEVVADFPTHFSQLIIEASNCLDPILIMDKLPDDVDIPNLSEALEKLLTDFTNYVELQQCCYDSTLNDLHVLTNNLMLASDKSVSVSLMTRCSLCSQVIMNTGQDMIPRKFNDIKVFKCGHIFHLTCSASEIDRRQMIEDGICIACSDNSDHVNV</sequence>
<gene>
    <name evidence="2" type="primary">vps-41</name>
    <name type="ORF">CBG14653</name>
</gene>